<sequence length="216" mass="22585">MSLGLVGRKVGMTRIFTAEGDSIPVTVLDVSDNRVTQIKTVETDGYTAVQVAFGSRRASRVTKPLAGHLAKAGVEAGEILKEFRIDAAKAAELSNGAVVGADLFEVGQKVDVQGVSIGKGYAGTIKRYNFSSGRATHGNSRSHNVPGSIGMAQDPGRVFPGKRMTGHMGDVTVTVQNLEIARIDAERKLLLVKGAIPGAKGGKVFVTPAVKTKGAK</sequence>
<feature type="chain" id="PRO_0000353597" description="Large ribosomal subunit protein uL3">
    <location>
        <begin position="1"/>
        <end position="216"/>
    </location>
</feature>
<feature type="region of interest" description="Disordered" evidence="2">
    <location>
        <begin position="133"/>
        <end position="153"/>
    </location>
</feature>
<feature type="compositionally biased region" description="Polar residues" evidence="2">
    <location>
        <begin position="133"/>
        <end position="145"/>
    </location>
</feature>
<feature type="modified residue" description="N5-methylglutamine" evidence="1">
    <location>
        <position position="153"/>
    </location>
</feature>
<comment type="function">
    <text evidence="1">One of the primary rRNA binding proteins, it binds directly near the 3'-end of the 23S rRNA, where it nucleates assembly of the 50S subunit.</text>
</comment>
<comment type="subunit">
    <text evidence="1">Part of the 50S ribosomal subunit. Forms a cluster with proteins L14 and L19.</text>
</comment>
<comment type="PTM">
    <text evidence="1">Methylated by PrmB.</text>
</comment>
<comment type="similarity">
    <text evidence="1">Belongs to the universal ribosomal protein uL3 family.</text>
</comment>
<dbReference type="EMBL" id="AM747720">
    <property type="protein sequence ID" value="CAR50545.1"/>
    <property type="molecule type" value="Genomic_DNA"/>
</dbReference>
<dbReference type="RefSeq" id="WP_006482922.1">
    <property type="nucleotide sequence ID" value="NC_011000.1"/>
</dbReference>
<dbReference type="SMR" id="B4E5C0"/>
<dbReference type="GeneID" id="93193451"/>
<dbReference type="KEGG" id="bcj:BCAL0234"/>
<dbReference type="eggNOG" id="COG0087">
    <property type="taxonomic scope" value="Bacteria"/>
</dbReference>
<dbReference type="HOGENOM" id="CLU_044142_4_1_4"/>
<dbReference type="BioCyc" id="BCEN216591:G1G1V-277-MONOMER"/>
<dbReference type="Proteomes" id="UP000001035">
    <property type="component" value="Chromosome 1"/>
</dbReference>
<dbReference type="GO" id="GO:0022625">
    <property type="term" value="C:cytosolic large ribosomal subunit"/>
    <property type="evidence" value="ECO:0007669"/>
    <property type="project" value="TreeGrafter"/>
</dbReference>
<dbReference type="GO" id="GO:0019843">
    <property type="term" value="F:rRNA binding"/>
    <property type="evidence" value="ECO:0007669"/>
    <property type="project" value="UniProtKB-UniRule"/>
</dbReference>
<dbReference type="GO" id="GO:0003735">
    <property type="term" value="F:structural constituent of ribosome"/>
    <property type="evidence" value="ECO:0007669"/>
    <property type="project" value="InterPro"/>
</dbReference>
<dbReference type="GO" id="GO:0006412">
    <property type="term" value="P:translation"/>
    <property type="evidence" value="ECO:0007669"/>
    <property type="project" value="UniProtKB-UniRule"/>
</dbReference>
<dbReference type="FunFam" id="2.40.30.10:FF:000004">
    <property type="entry name" value="50S ribosomal protein L3"/>
    <property type="match status" value="1"/>
</dbReference>
<dbReference type="FunFam" id="3.30.160.810:FF:000001">
    <property type="entry name" value="50S ribosomal protein L3"/>
    <property type="match status" value="1"/>
</dbReference>
<dbReference type="Gene3D" id="3.30.160.810">
    <property type="match status" value="1"/>
</dbReference>
<dbReference type="Gene3D" id="2.40.30.10">
    <property type="entry name" value="Translation factors"/>
    <property type="match status" value="1"/>
</dbReference>
<dbReference type="HAMAP" id="MF_01325_B">
    <property type="entry name" value="Ribosomal_uL3_B"/>
    <property type="match status" value="1"/>
</dbReference>
<dbReference type="InterPro" id="IPR000597">
    <property type="entry name" value="Ribosomal_uL3"/>
</dbReference>
<dbReference type="InterPro" id="IPR019927">
    <property type="entry name" value="Ribosomal_uL3_bac/org-type"/>
</dbReference>
<dbReference type="InterPro" id="IPR019926">
    <property type="entry name" value="Ribosomal_uL3_CS"/>
</dbReference>
<dbReference type="InterPro" id="IPR009000">
    <property type="entry name" value="Transl_B-barrel_sf"/>
</dbReference>
<dbReference type="NCBIfam" id="TIGR03625">
    <property type="entry name" value="L3_bact"/>
    <property type="match status" value="1"/>
</dbReference>
<dbReference type="PANTHER" id="PTHR11229">
    <property type="entry name" value="50S RIBOSOMAL PROTEIN L3"/>
    <property type="match status" value="1"/>
</dbReference>
<dbReference type="PANTHER" id="PTHR11229:SF16">
    <property type="entry name" value="LARGE RIBOSOMAL SUBUNIT PROTEIN UL3C"/>
    <property type="match status" value="1"/>
</dbReference>
<dbReference type="Pfam" id="PF00297">
    <property type="entry name" value="Ribosomal_L3"/>
    <property type="match status" value="1"/>
</dbReference>
<dbReference type="SUPFAM" id="SSF50447">
    <property type="entry name" value="Translation proteins"/>
    <property type="match status" value="1"/>
</dbReference>
<dbReference type="PROSITE" id="PS00474">
    <property type="entry name" value="RIBOSOMAL_L3"/>
    <property type="match status" value="1"/>
</dbReference>
<name>RL3_BURCJ</name>
<gene>
    <name evidence="1" type="primary">rplC</name>
    <name type="ordered locus">BceJ2315_02370</name>
    <name type="ORF">BCAL0234</name>
</gene>
<keyword id="KW-0488">Methylation</keyword>
<keyword id="KW-0687">Ribonucleoprotein</keyword>
<keyword id="KW-0689">Ribosomal protein</keyword>
<keyword id="KW-0694">RNA-binding</keyword>
<keyword id="KW-0699">rRNA-binding</keyword>
<reference key="1">
    <citation type="journal article" date="2009" name="J. Bacteriol.">
        <title>The genome of Burkholderia cenocepacia J2315, an epidemic pathogen of cystic fibrosis patients.</title>
        <authorList>
            <person name="Holden M.T."/>
            <person name="Seth-Smith H.M."/>
            <person name="Crossman L.C."/>
            <person name="Sebaihia M."/>
            <person name="Bentley S.D."/>
            <person name="Cerdeno-Tarraga A.M."/>
            <person name="Thomson N.R."/>
            <person name="Bason N."/>
            <person name="Quail M.A."/>
            <person name="Sharp S."/>
            <person name="Cherevach I."/>
            <person name="Churcher C."/>
            <person name="Goodhead I."/>
            <person name="Hauser H."/>
            <person name="Holroyd N."/>
            <person name="Mungall K."/>
            <person name="Scott P."/>
            <person name="Walker D."/>
            <person name="White B."/>
            <person name="Rose H."/>
            <person name="Iversen P."/>
            <person name="Mil-Homens D."/>
            <person name="Rocha E.P."/>
            <person name="Fialho A.M."/>
            <person name="Baldwin A."/>
            <person name="Dowson C."/>
            <person name="Barrell B.G."/>
            <person name="Govan J.R."/>
            <person name="Vandamme P."/>
            <person name="Hart C.A."/>
            <person name="Mahenthiralingam E."/>
            <person name="Parkhill J."/>
        </authorList>
    </citation>
    <scope>NUCLEOTIDE SEQUENCE [LARGE SCALE GENOMIC DNA]</scope>
    <source>
        <strain>ATCC BAA-245 / DSM 16553 / LMG 16656 / NCTC 13227 / J2315 / CF5610</strain>
    </source>
</reference>
<organism>
    <name type="scientific">Burkholderia cenocepacia (strain ATCC BAA-245 / DSM 16553 / LMG 16656 / NCTC 13227 / J2315 / CF5610)</name>
    <name type="common">Burkholderia cepacia (strain J2315)</name>
    <dbReference type="NCBI Taxonomy" id="216591"/>
    <lineage>
        <taxon>Bacteria</taxon>
        <taxon>Pseudomonadati</taxon>
        <taxon>Pseudomonadota</taxon>
        <taxon>Betaproteobacteria</taxon>
        <taxon>Burkholderiales</taxon>
        <taxon>Burkholderiaceae</taxon>
        <taxon>Burkholderia</taxon>
        <taxon>Burkholderia cepacia complex</taxon>
    </lineage>
</organism>
<protein>
    <recommendedName>
        <fullName evidence="1">Large ribosomal subunit protein uL3</fullName>
    </recommendedName>
    <alternativeName>
        <fullName evidence="3">50S ribosomal protein L3</fullName>
    </alternativeName>
</protein>
<accession>B4E5C0</accession>
<evidence type="ECO:0000255" key="1">
    <source>
        <dbReference type="HAMAP-Rule" id="MF_01325"/>
    </source>
</evidence>
<evidence type="ECO:0000256" key="2">
    <source>
        <dbReference type="SAM" id="MobiDB-lite"/>
    </source>
</evidence>
<evidence type="ECO:0000305" key="3"/>
<proteinExistence type="inferred from homology"/>